<reference key="1">
    <citation type="submission" date="2007-02" db="EMBL/GenBank/DDBJ databases">
        <title>Complete sequence of Clostridium thermocellum ATCC 27405.</title>
        <authorList>
            <consortium name="US DOE Joint Genome Institute"/>
            <person name="Copeland A."/>
            <person name="Lucas S."/>
            <person name="Lapidus A."/>
            <person name="Barry K."/>
            <person name="Detter J.C."/>
            <person name="Glavina del Rio T."/>
            <person name="Hammon N."/>
            <person name="Israni S."/>
            <person name="Dalin E."/>
            <person name="Tice H."/>
            <person name="Pitluck S."/>
            <person name="Chertkov O."/>
            <person name="Brettin T."/>
            <person name="Bruce D."/>
            <person name="Han C."/>
            <person name="Tapia R."/>
            <person name="Gilna P."/>
            <person name="Schmutz J."/>
            <person name="Larimer F."/>
            <person name="Land M."/>
            <person name="Hauser L."/>
            <person name="Kyrpides N."/>
            <person name="Mikhailova N."/>
            <person name="Wu J.H.D."/>
            <person name="Newcomb M."/>
            <person name="Richardson P."/>
        </authorList>
    </citation>
    <scope>NUCLEOTIDE SEQUENCE [LARGE SCALE GENOMIC DNA]</scope>
    <source>
        <strain>ATCC 27405 / DSM 1237 / JCM 9322 / NBRC 103400 / NCIMB 10682 / NRRL B-4536 / VPI 7372</strain>
    </source>
</reference>
<gene>
    <name evidence="1" type="primary">atpA</name>
    <name type="ordered locus">Cthe_2267</name>
</gene>
<comment type="function">
    <text evidence="1">Produces ATP from ADP in the presence of a proton gradient across the membrane. The V-type alpha chain is a catalytic subunit.</text>
</comment>
<comment type="catalytic activity">
    <reaction evidence="1">
        <text>ATP + H2O + 4 H(+)(in) = ADP + phosphate + 5 H(+)(out)</text>
        <dbReference type="Rhea" id="RHEA:57720"/>
        <dbReference type="ChEBI" id="CHEBI:15377"/>
        <dbReference type="ChEBI" id="CHEBI:15378"/>
        <dbReference type="ChEBI" id="CHEBI:30616"/>
        <dbReference type="ChEBI" id="CHEBI:43474"/>
        <dbReference type="ChEBI" id="CHEBI:456216"/>
        <dbReference type="EC" id="7.1.2.2"/>
    </reaction>
</comment>
<comment type="similarity">
    <text evidence="1">Belongs to the ATPase alpha/beta chains family.</text>
</comment>
<organism>
    <name type="scientific">Acetivibrio thermocellus (strain ATCC 27405 / DSM 1237 / JCM 9322 / NBRC 103400 / NCIMB 10682 / NRRL B-4536 / VPI 7372)</name>
    <name type="common">Clostridium thermocellum</name>
    <dbReference type="NCBI Taxonomy" id="203119"/>
    <lineage>
        <taxon>Bacteria</taxon>
        <taxon>Bacillati</taxon>
        <taxon>Bacillota</taxon>
        <taxon>Clostridia</taxon>
        <taxon>Eubacteriales</taxon>
        <taxon>Oscillospiraceae</taxon>
        <taxon>Acetivibrio</taxon>
    </lineage>
</organism>
<keyword id="KW-0066">ATP synthesis</keyword>
<keyword id="KW-0067">ATP-binding</keyword>
<keyword id="KW-0375">Hydrogen ion transport</keyword>
<keyword id="KW-0406">Ion transport</keyword>
<keyword id="KW-0547">Nucleotide-binding</keyword>
<keyword id="KW-1185">Reference proteome</keyword>
<keyword id="KW-1278">Translocase</keyword>
<keyword id="KW-0813">Transport</keyword>
<name>VATA_ACET2</name>
<protein>
    <recommendedName>
        <fullName evidence="1">V-type ATP synthase alpha chain</fullName>
        <ecNumber evidence="1">7.1.2.2</ecNumber>
    </recommendedName>
    <alternativeName>
        <fullName evidence="1">V-ATPase subunit A</fullName>
    </alternativeName>
</protein>
<feature type="chain" id="PRO_1000059340" description="V-type ATP synthase alpha chain">
    <location>
        <begin position="1"/>
        <end position="589"/>
    </location>
</feature>
<feature type="binding site" evidence="1">
    <location>
        <begin position="232"/>
        <end position="239"/>
    </location>
    <ligand>
        <name>ATP</name>
        <dbReference type="ChEBI" id="CHEBI:30616"/>
    </ligand>
</feature>
<proteinExistence type="inferred from homology"/>
<dbReference type="EC" id="7.1.2.2" evidence="1"/>
<dbReference type="EMBL" id="CP000568">
    <property type="protein sequence ID" value="ABN53469.1"/>
    <property type="molecule type" value="Genomic_DNA"/>
</dbReference>
<dbReference type="RefSeq" id="WP_003513515.1">
    <property type="nucleotide sequence ID" value="NC_009012.1"/>
</dbReference>
<dbReference type="SMR" id="A3DHP0"/>
<dbReference type="STRING" id="203119.Cthe_2267"/>
<dbReference type="GeneID" id="35805603"/>
<dbReference type="KEGG" id="cth:Cthe_2267"/>
<dbReference type="eggNOG" id="COG1155">
    <property type="taxonomic scope" value="Bacteria"/>
</dbReference>
<dbReference type="HOGENOM" id="CLU_008162_3_1_9"/>
<dbReference type="OrthoDB" id="9803053at2"/>
<dbReference type="Proteomes" id="UP000002145">
    <property type="component" value="Chromosome"/>
</dbReference>
<dbReference type="GO" id="GO:0045259">
    <property type="term" value="C:proton-transporting ATP synthase complex"/>
    <property type="evidence" value="ECO:0007669"/>
    <property type="project" value="UniProtKB-ARBA"/>
</dbReference>
<dbReference type="GO" id="GO:0005524">
    <property type="term" value="F:ATP binding"/>
    <property type="evidence" value="ECO:0007669"/>
    <property type="project" value="UniProtKB-UniRule"/>
</dbReference>
<dbReference type="GO" id="GO:0046933">
    <property type="term" value="F:proton-transporting ATP synthase activity, rotational mechanism"/>
    <property type="evidence" value="ECO:0007669"/>
    <property type="project" value="UniProtKB-UniRule"/>
</dbReference>
<dbReference type="GO" id="GO:0046961">
    <property type="term" value="F:proton-transporting ATPase activity, rotational mechanism"/>
    <property type="evidence" value="ECO:0007669"/>
    <property type="project" value="InterPro"/>
</dbReference>
<dbReference type="GO" id="GO:0042777">
    <property type="term" value="P:proton motive force-driven plasma membrane ATP synthesis"/>
    <property type="evidence" value="ECO:0007669"/>
    <property type="project" value="UniProtKB-UniRule"/>
</dbReference>
<dbReference type="CDD" id="cd18111">
    <property type="entry name" value="ATP-synt_V_A-type_alpha_C"/>
    <property type="match status" value="1"/>
</dbReference>
<dbReference type="CDD" id="cd18119">
    <property type="entry name" value="ATP-synt_V_A-type_alpha_N"/>
    <property type="match status" value="1"/>
</dbReference>
<dbReference type="CDD" id="cd01134">
    <property type="entry name" value="V_A-ATPase_A"/>
    <property type="match status" value="1"/>
</dbReference>
<dbReference type="FunFam" id="3.40.50.300:FF:000675">
    <property type="entry name" value="V-type ATP synthase alpha chain"/>
    <property type="match status" value="1"/>
</dbReference>
<dbReference type="FunFam" id="2.40.30.20:FF:000002">
    <property type="entry name" value="V-type proton ATPase catalytic subunit A"/>
    <property type="match status" value="1"/>
</dbReference>
<dbReference type="FunFam" id="2.40.50.100:FF:000008">
    <property type="entry name" value="V-type proton ATPase catalytic subunit A"/>
    <property type="match status" value="1"/>
</dbReference>
<dbReference type="Gene3D" id="2.40.30.20">
    <property type="match status" value="1"/>
</dbReference>
<dbReference type="Gene3D" id="2.40.50.100">
    <property type="match status" value="1"/>
</dbReference>
<dbReference type="Gene3D" id="1.10.1140.10">
    <property type="entry name" value="Bovine Mitochondrial F1-atpase, Atp Synthase Beta Chain, Chain D, domain 3"/>
    <property type="match status" value="1"/>
</dbReference>
<dbReference type="Gene3D" id="3.40.50.300">
    <property type="entry name" value="P-loop containing nucleotide triphosphate hydrolases"/>
    <property type="match status" value="1"/>
</dbReference>
<dbReference type="HAMAP" id="MF_00309">
    <property type="entry name" value="ATP_synth_A_arch"/>
    <property type="match status" value="1"/>
</dbReference>
<dbReference type="InterPro" id="IPR055190">
    <property type="entry name" value="ATP-synt_VA_C"/>
</dbReference>
<dbReference type="InterPro" id="IPR031686">
    <property type="entry name" value="ATP-synth_a_Xtn"/>
</dbReference>
<dbReference type="InterPro" id="IPR023366">
    <property type="entry name" value="ATP_synth_asu-like_sf"/>
</dbReference>
<dbReference type="InterPro" id="IPR020003">
    <property type="entry name" value="ATPase_a/bsu_AS"/>
</dbReference>
<dbReference type="InterPro" id="IPR004100">
    <property type="entry name" value="ATPase_F1/V1/A1_a/bsu_N"/>
</dbReference>
<dbReference type="InterPro" id="IPR036121">
    <property type="entry name" value="ATPase_F1/V1/A1_a/bsu_N_sf"/>
</dbReference>
<dbReference type="InterPro" id="IPR000194">
    <property type="entry name" value="ATPase_F1/V1/A1_a/bsu_nucl-bd"/>
</dbReference>
<dbReference type="InterPro" id="IPR024034">
    <property type="entry name" value="ATPase_F1/V1_b/a_C"/>
</dbReference>
<dbReference type="InterPro" id="IPR027417">
    <property type="entry name" value="P-loop_NTPase"/>
</dbReference>
<dbReference type="InterPro" id="IPR022878">
    <property type="entry name" value="V-ATPase_asu"/>
</dbReference>
<dbReference type="NCBIfam" id="NF003220">
    <property type="entry name" value="PRK04192.1"/>
    <property type="match status" value="1"/>
</dbReference>
<dbReference type="PANTHER" id="PTHR43607:SF1">
    <property type="entry name" value="H(+)-TRANSPORTING TWO-SECTOR ATPASE"/>
    <property type="match status" value="1"/>
</dbReference>
<dbReference type="PANTHER" id="PTHR43607">
    <property type="entry name" value="V-TYPE PROTON ATPASE CATALYTIC SUBUNIT A"/>
    <property type="match status" value="1"/>
</dbReference>
<dbReference type="Pfam" id="PF00006">
    <property type="entry name" value="ATP-synt_ab"/>
    <property type="match status" value="1"/>
</dbReference>
<dbReference type="Pfam" id="PF02874">
    <property type="entry name" value="ATP-synt_ab_N"/>
    <property type="match status" value="1"/>
</dbReference>
<dbReference type="Pfam" id="PF16886">
    <property type="entry name" value="ATP-synt_ab_Xtn"/>
    <property type="match status" value="1"/>
</dbReference>
<dbReference type="Pfam" id="PF22919">
    <property type="entry name" value="ATP-synt_VA_C"/>
    <property type="match status" value="1"/>
</dbReference>
<dbReference type="SUPFAM" id="SSF47917">
    <property type="entry name" value="C-terminal domain of alpha and beta subunits of F1 ATP synthase"/>
    <property type="match status" value="1"/>
</dbReference>
<dbReference type="SUPFAM" id="SSF50615">
    <property type="entry name" value="N-terminal domain of alpha and beta subunits of F1 ATP synthase"/>
    <property type="match status" value="1"/>
</dbReference>
<dbReference type="SUPFAM" id="SSF52540">
    <property type="entry name" value="P-loop containing nucleoside triphosphate hydrolases"/>
    <property type="match status" value="1"/>
</dbReference>
<dbReference type="PROSITE" id="PS00152">
    <property type="entry name" value="ATPASE_ALPHA_BETA"/>
    <property type="match status" value="1"/>
</dbReference>
<accession>A3DHP0</accession>
<evidence type="ECO:0000255" key="1">
    <source>
        <dbReference type="HAMAP-Rule" id="MF_00309"/>
    </source>
</evidence>
<sequence>MSQGTIVKVSGPLVIAEGMRDANMFDVVRVSEHRLIGEIIEMHGDRASIQVYEETAGLGPGEPVVSTGAPLSVELGPGLIENIFDGIQRPLVKMREMVGSNITRGIDVTALDRSKKWDFQPTVKKGDKVTAGDVIGKVQETSIVEHRIMVPYGVQGTIEEIKSGSFTVEETVAKVRTENNELVDICMMQKWPVRIGRPYREKLPPNAPLVTGQRVIDTLFPLAKGGVAAVPGPFGSGKTVVQHQLAKWADADIVVYIGCGERGNEMTDVLKEFPELKDPKTGESLMKRTVLIANTSDMPVAAREASIYTGMTIAEYFRDMGYSVALMADSTSRWAEALREMSGRLEEMPGEEGYPAYLGSRLAQFYERAGRVVCLGSDGREGALTAIGAVSPPGGDLSEPVTQATLRIIKVFWGLDSSLAYRRHFPAINWLQSYSLYLDIIGKWISENISRDWETLRSDTMRILQEEAELEEIVRLVGVDALSPSDRLTLEAAKSIREDYLHQNAFHEVDTYTSLNKQYRMLKLILGFYYSGKKALEAGVSIKELFELPVREKIGRAKYTPEDQVNSHFNEIEKELNEQIEALIAKEVQ</sequence>